<gene>
    <name evidence="1" type="primary">ytfE</name>
    <name type="ordered locus">SCH_4275</name>
</gene>
<proteinExistence type="inferred from homology"/>
<evidence type="ECO:0000255" key="1">
    <source>
        <dbReference type="HAMAP-Rule" id="MF_01606"/>
    </source>
</evidence>
<reference key="1">
    <citation type="journal article" date="2005" name="Nucleic Acids Res.">
        <title>The genome sequence of Salmonella enterica serovar Choleraesuis, a highly invasive and resistant zoonotic pathogen.</title>
        <authorList>
            <person name="Chiu C.-H."/>
            <person name="Tang P."/>
            <person name="Chu C."/>
            <person name="Hu S."/>
            <person name="Bao Q."/>
            <person name="Yu J."/>
            <person name="Chou Y.-Y."/>
            <person name="Wang H.-S."/>
            <person name="Lee Y.-S."/>
        </authorList>
    </citation>
    <scope>NUCLEOTIDE SEQUENCE [LARGE SCALE GENOMIC DNA]</scope>
    <source>
        <strain>SC-B67</strain>
    </source>
</reference>
<comment type="function">
    <text evidence="1">Di-iron-containing protein involved in the repair of iron-sulfur clusters damaged by oxidative and nitrosative stress conditions.</text>
</comment>
<comment type="subunit">
    <text evidence="1">Homodimer.</text>
</comment>
<comment type="subcellular location">
    <subcellularLocation>
        <location evidence="1">Cytoplasm</location>
    </subcellularLocation>
</comment>
<comment type="similarity">
    <text evidence="1">Belongs to the RIC family. YtfE subfamily.</text>
</comment>
<name>YTFE_SALCH</name>
<accession>Q57GI1</accession>
<feature type="chain" id="PRO_0000291699" description="Iron-sulfur cluster repair protein YtfE">
    <location>
        <begin position="1"/>
        <end position="220"/>
    </location>
</feature>
<dbReference type="EMBL" id="AE017220">
    <property type="protein sequence ID" value="AAX68181.1"/>
    <property type="molecule type" value="Genomic_DNA"/>
</dbReference>
<dbReference type="RefSeq" id="WP_001541383.1">
    <property type="nucleotide sequence ID" value="NC_006905.1"/>
</dbReference>
<dbReference type="SMR" id="Q57GI1"/>
<dbReference type="KEGG" id="sec:SCH_4275"/>
<dbReference type="HOGENOM" id="CLU_076075_2_0_6"/>
<dbReference type="Proteomes" id="UP000000538">
    <property type="component" value="Chromosome"/>
</dbReference>
<dbReference type="GO" id="GO:0005737">
    <property type="term" value="C:cytoplasm"/>
    <property type="evidence" value="ECO:0007669"/>
    <property type="project" value="UniProtKB-SubCell"/>
</dbReference>
<dbReference type="GO" id="GO:0046872">
    <property type="term" value="F:metal ion binding"/>
    <property type="evidence" value="ECO:0007669"/>
    <property type="project" value="UniProtKB-KW"/>
</dbReference>
<dbReference type="GO" id="GO:0030091">
    <property type="term" value="P:protein repair"/>
    <property type="evidence" value="ECO:0007669"/>
    <property type="project" value="UniProtKB-UniRule"/>
</dbReference>
<dbReference type="GO" id="GO:0051409">
    <property type="term" value="P:response to nitrosative stress"/>
    <property type="evidence" value="ECO:0007669"/>
    <property type="project" value="UniProtKB-UniRule"/>
</dbReference>
<dbReference type="GO" id="GO:0006979">
    <property type="term" value="P:response to oxidative stress"/>
    <property type="evidence" value="ECO:0007669"/>
    <property type="project" value="UniProtKB-UniRule"/>
</dbReference>
<dbReference type="FunFam" id="1.20.120.520:FF:000001">
    <property type="entry name" value="Iron-sulfur cluster repair protein YtfE"/>
    <property type="match status" value="1"/>
</dbReference>
<dbReference type="Gene3D" id="1.20.120.520">
    <property type="entry name" value="nmb1532 protein domain like"/>
    <property type="match status" value="1"/>
</dbReference>
<dbReference type="HAMAP" id="MF_01606">
    <property type="entry name" value="RIC_YtfE"/>
    <property type="match status" value="1"/>
</dbReference>
<dbReference type="InterPro" id="IPR023742">
    <property type="entry name" value="FeS-repair_YftE"/>
</dbReference>
<dbReference type="InterPro" id="IPR012312">
    <property type="entry name" value="Hemerythrin-like"/>
</dbReference>
<dbReference type="InterPro" id="IPR019903">
    <property type="entry name" value="RIC_family"/>
</dbReference>
<dbReference type="NCBIfam" id="TIGR03652">
    <property type="entry name" value="FeS_repair_RIC"/>
    <property type="match status" value="1"/>
</dbReference>
<dbReference type="NCBIfam" id="NF008221">
    <property type="entry name" value="PRK10992.1"/>
    <property type="match status" value="1"/>
</dbReference>
<dbReference type="PANTHER" id="PTHR36438">
    <property type="entry name" value="IRON-SULFUR CLUSTER REPAIR PROTEIN YTFE"/>
    <property type="match status" value="1"/>
</dbReference>
<dbReference type="PANTHER" id="PTHR36438:SF1">
    <property type="entry name" value="IRON-SULFUR CLUSTER REPAIR PROTEIN YTFE"/>
    <property type="match status" value="1"/>
</dbReference>
<dbReference type="Pfam" id="PF01814">
    <property type="entry name" value="Hemerythrin"/>
    <property type="match status" value="1"/>
</dbReference>
<dbReference type="Pfam" id="PF04405">
    <property type="entry name" value="ScdA_N"/>
    <property type="match status" value="1"/>
</dbReference>
<sequence>MAYRDQPLGELALSIPRASALFRQYDMDYCCGGKQTLARAATRHDVDIDIIEAQLAQLAEQPIEKDWRAVPLADIIDHIVVRYHDRHREQLPELILQATKVERVHADKPNVPRGLTKYLTALHEELSSHMMKEEQILFPMIKQGMGRQATGPISVMESEHDEAGELVDVIKHVTQNVTPPPEACTTWKAMYNGINEMIDDLMEHISLENNVLFPRALAGE</sequence>
<organism>
    <name type="scientific">Salmonella choleraesuis (strain SC-B67)</name>
    <dbReference type="NCBI Taxonomy" id="321314"/>
    <lineage>
        <taxon>Bacteria</taxon>
        <taxon>Pseudomonadati</taxon>
        <taxon>Pseudomonadota</taxon>
        <taxon>Gammaproteobacteria</taxon>
        <taxon>Enterobacterales</taxon>
        <taxon>Enterobacteriaceae</taxon>
        <taxon>Salmonella</taxon>
    </lineage>
</organism>
<protein>
    <recommendedName>
        <fullName evidence="1">Iron-sulfur cluster repair protein YtfE</fullName>
    </recommendedName>
</protein>
<keyword id="KW-0963">Cytoplasm</keyword>
<keyword id="KW-0408">Iron</keyword>
<keyword id="KW-0479">Metal-binding</keyword>
<keyword id="KW-0346">Stress response</keyword>